<gene>
    <name evidence="1" type="primary">pyrB</name>
    <name type="ordered locus">COXBURSA331_A2221</name>
</gene>
<accession>A9NBU3</accession>
<proteinExistence type="inferred from homology"/>
<name>PYRB_COXBR</name>
<evidence type="ECO:0000255" key="1">
    <source>
        <dbReference type="HAMAP-Rule" id="MF_00001"/>
    </source>
</evidence>
<sequence length="310" mass="34944">MNELPLHLLNMRSLTRDHIEKLIQRANYFLTQGMEKNSVFETLKGHVVANLFFEPSTRTRNSFEIAAKRLGAMVLNPNLKISAISKGETLFDTIKTLEAMGVYFFIVRHSENETPEQIAKQLSSGVVINAGDGNHQHPSQALIDLMTIKQHKPHWNKLCVTIIGDIRHSRVANSLMDGLVTMGVPEIRLVGPSSLLPDKVGNDSIKKFTELKPSLLNSDVIVTLRLQKERHDNSVDIDAFRGSFRLTPEKLYSAKPDAIVMHPGPVNREVEINSDVADNQQSVILQQVRNGVAMRMAVLELFLLRDFRFF</sequence>
<organism>
    <name type="scientific">Coxiella burnetii (strain RSA 331 / Henzerling II)</name>
    <dbReference type="NCBI Taxonomy" id="360115"/>
    <lineage>
        <taxon>Bacteria</taxon>
        <taxon>Pseudomonadati</taxon>
        <taxon>Pseudomonadota</taxon>
        <taxon>Gammaproteobacteria</taxon>
        <taxon>Legionellales</taxon>
        <taxon>Coxiellaceae</taxon>
        <taxon>Coxiella</taxon>
    </lineage>
</organism>
<dbReference type="EC" id="2.1.3.2" evidence="1"/>
<dbReference type="EMBL" id="CP000890">
    <property type="protein sequence ID" value="ABX79106.1"/>
    <property type="molecule type" value="Genomic_DNA"/>
</dbReference>
<dbReference type="RefSeq" id="WP_010958650.1">
    <property type="nucleotide sequence ID" value="NC_010117.1"/>
</dbReference>
<dbReference type="SMR" id="A9NBU3"/>
<dbReference type="KEGG" id="cbs:COXBURSA331_A2221"/>
<dbReference type="HOGENOM" id="CLU_043846_2_0_6"/>
<dbReference type="UniPathway" id="UPA00070">
    <property type="reaction ID" value="UER00116"/>
</dbReference>
<dbReference type="GO" id="GO:0005829">
    <property type="term" value="C:cytosol"/>
    <property type="evidence" value="ECO:0007669"/>
    <property type="project" value="TreeGrafter"/>
</dbReference>
<dbReference type="GO" id="GO:0016597">
    <property type="term" value="F:amino acid binding"/>
    <property type="evidence" value="ECO:0007669"/>
    <property type="project" value="InterPro"/>
</dbReference>
<dbReference type="GO" id="GO:0004070">
    <property type="term" value="F:aspartate carbamoyltransferase activity"/>
    <property type="evidence" value="ECO:0007669"/>
    <property type="project" value="UniProtKB-UniRule"/>
</dbReference>
<dbReference type="GO" id="GO:0006207">
    <property type="term" value="P:'de novo' pyrimidine nucleobase biosynthetic process"/>
    <property type="evidence" value="ECO:0007669"/>
    <property type="project" value="InterPro"/>
</dbReference>
<dbReference type="GO" id="GO:0044205">
    <property type="term" value="P:'de novo' UMP biosynthetic process"/>
    <property type="evidence" value="ECO:0007669"/>
    <property type="project" value="UniProtKB-UniRule"/>
</dbReference>
<dbReference type="GO" id="GO:0006520">
    <property type="term" value="P:amino acid metabolic process"/>
    <property type="evidence" value="ECO:0007669"/>
    <property type="project" value="InterPro"/>
</dbReference>
<dbReference type="Gene3D" id="3.40.50.1370">
    <property type="entry name" value="Aspartate/ornithine carbamoyltransferase"/>
    <property type="match status" value="2"/>
</dbReference>
<dbReference type="HAMAP" id="MF_00001">
    <property type="entry name" value="Asp_carb_tr"/>
    <property type="match status" value="1"/>
</dbReference>
<dbReference type="InterPro" id="IPR006132">
    <property type="entry name" value="Asp/Orn_carbamoyltranf_P-bd"/>
</dbReference>
<dbReference type="InterPro" id="IPR006130">
    <property type="entry name" value="Asp/Orn_carbamoylTrfase"/>
</dbReference>
<dbReference type="InterPro" id="IPR036901">
    <property type="entry name" value="Asp/Orn_carbamoylTrfase_sf"/>
</dbReference>
<dbReference type="InterPro" id="IPR002082">
    <property type="entry name" value="Asp_carbamoyltransf"/>
</dbReference>
<dbReference type="InterPro" id="IPR006131">
    <property type="entry name" value="Asp_carbamoyltransf_Asp/Orn-bd"/>
</dbReference>
<dbReference type="NCBIfam" id="TIGR00670">
    <property type="entry name" value="asp_carb_tr"/>
    <property type="match status" value="1"/>
</dbReference>
<dbReference type="NCBIfam" id="NF002032">
    <property type="entry name" value="PRK00856.1"/>
    <property type="match status" value="1"/>
</dbReference>
<dbReference type="NCBIfam" id="NF010387">
    <property type="entry name" value="PRK13814.1"/>
    <property type="match status" value="1"/>
</dbReference>
<dbReference type="PANTHER" id="PTHR45753:SF6">
    <property type="entry name" value="ASPARTATE CARBAMOYLTRANSFERASE"/>
    <property type="match status" value="1"/>
</dbReference>
<dbReference type="PANTHER" id="PTHR45753">
    <property type="entry name" value="ORNITHINE CARBAMOYLTRANSFERASE, MITOCHONDRIAL"/>
    <property type="match status" value="1"/>
</dbReference>
<dbReference type="Pfam" id="PF00185">
    <property type="entry name" value="OTCace"/>
    <property type="match status" value="1"/>
</dbReference>
<dbReference type="Pfam" id="PF02729">
    <property type="entry name" value="OTCace_N"/>
    <property type="match status" value="1"/>
</dbReference>
<dbReference type="PRINTS" id="PR00100">
    <property type="entry name" value="AOTCASE"/>
</dbReference>
<dbReference type="PRINTS" id="PR00101">
    <property type="entry name" value="ATCASE"/>
</dbReference>
<dbReference type="SUPFAM" id="SSF53671">
    <property type="entry name" value="Aspartate/ornithine carbamoyltransferase"/>
    <property type="match status" value="1"/>
</dbReference>
<dbReference type="PROSITE" id="PS00097">
    <property type="entry name" value="CARBAMOYLTRANSFERASE"/>
    <property type="match status" value="1"/>
</dbReference>
<comment type="function">
    <text evidence="1">Catalyzes the condensation of carbamoyl phosphate and aspartate to form carbamoyl aspartate and inorganic phosphate, the committed step in the de novo pyrimidine nucleotide biosynthesis pathway.</text>
</comment>
<comment type="catalytic activity">
    <reaction evidence="1">
        <text>carbamoyl phosphate + L-aspartate = N-carbamoyl-L-aspartate + phosphate + H(+)</text>
        <dbReference type="Rhea" id="RHEA:20013"/>
        <dbReference type="ChEBI" id="CHEBI:15378"/>
        <dbReference type="ChEBI" id="CHEBI:29991"/>
        <dbReference type="ChEBI" id="CHEBI:32814"/>
        <dbReference type="ChEBI" id="CHEBI:43474"/>
        <dbReference type="ChEBI" id="CHEBI:58228"/>
        <dbReference type="EC" id="2.1.3.2"/>
    </reaction>
</comment>
<comment type="pathway">
    <text evidence="1">Pyrimidine metabolism; UMP biosynthesis via de novo pathway; (S)-dihydroorotate from bicarbonate: step 2/3.</text>
</comment>
<comment type="subunit">
    <text evidence="1">Heterododecamer (2C3:3R2) of six catalytic PyrB chains organized as two trimers (C3), and six regulatory PyrI chains organized as three dimers (R2).</text>
</comment>
<comment type="similarity">
    <text evidence="1">Belongs to the aspartate/ornithine carbamoyltransferase superfamily. ATCase family.</text>
</comment>
<feature type="chain" id="PRO_1000073726" description="Aspartate carbamoyltransferase catalytic subunit">
    <location>
        <begin position="1"/>
        <end position="310"/>
    </location>
</feature>
<feature type="binding site" evidence="1">
    <location>
        <position position="58"/>
    </location>
    <ligand>
        <name>carbamoyl phosphate</name>
        <dbReference type="ChEBI" id="CHEBI:58228"/>
    </ligand>
</feature>
<feature type="binding site" evidence="1">
    <location>
        <position position="59"/>
    </location>
    <ligand>
        <name>carbamoyl phosphate</name>
        <dbReference type="ChEBI" id="CHEBI:58228"/>
    </ligand>
</feature>
<feature type="binding site" evidence="1">
    <location>
        <position position="86"/>
    </location>
    <ligand>
        <name>L-aspartate</name>
        <dbReference type="ChEBI" id="CHEBI:29991"/>
    </ligand>
</feature>
<feature type="binding site" evidence="1">
    <location>
        <position position="108"/>
    </location>
    <ligand>
        <name>carbamoyl phosphate</name>
        <dbReference type="ChEBI" id="CHEBI:58228"/>
    </ligand>
</feature>
<feature type="binding site" evidence="1">
    <location>
        <position position="137"/>
    </location>
    <ligand>
        <name>carbamoyl phosphate</name>
        <dbReference type="ChEBI" id="CHEBI:58228"/>
    </ligand>
</feature>
<feature type="binding site" evidence="1">
    <location>
        <position position="140"/>
    </location>
    <ligand>
        <name>carbamoyl phosphate</name>
        <dbReference type="ChEBI" id="CHEBI:58228"/>
    </ligand>
</feature>
<feature type="binding site" evidence="1">
    <location>
        <position position="170"/>
    </location>
    <ligand>
        <name>L-aspartate</name>
        <dbReference type="ChEBI" id="CHEBI:29991"/>
    </ligand>
</feature>
<feature type="binding site" evidence="1">
    <location>
        <position position="225"/>
    </location>
    <ligand>
        <name>L-aspartate</name>
        <dbReference type="ChEBI" id="CHEBI:29991"/>
    </ligand>
</feature>
<feature type="binding site" evidence="1">
    <location>
        <position position="264"/>
    </location>
    <ligand>
        <name>carbamoyl phosphate</name>
        <dbReference type="ChEBI" id="CHEBI:58228"/>
    </ligand>
</feature>
<feature type="binding site" evidence="1">
    <location>
        <position position="265"/>
    </location>
    <ligand>
        <name>carbamoyl phosphate</name>
        <dbReference type="ChEBI" id="CHEBI:58228"/>
    </ligand>
</feature>
<protein>
    <recommendedName>
        <fullName evidence="1">Aspartate carbamoyltransferase catalytic subunit</fullName>
        <ecNumber evidence="1">2.1.3.2</ecNumber>
    </recommendedName>
    <alternativeName>
        <fullName evidence="1">Aspartate transcarbamylase</fullName>
        <shortName evidence="1">ATCase</shortName>
    </alternativeName>
</protein>
<reference key="1">
    <citation type="submission" date="2007-11" db="EMBL/GenBank/DDBJ databases">
        <title>Genome sequencing of phylogenetically and phenotypically diverse Coxiella burnetii isolates.</title>
        <authorList>
            <person name="Seshadri R."/>
            <person name="Samuel J.E."/>
        </authorList>
    </citation>
    <scope>NUCLEOTIDE SEQUENCE [LARGE SCALE GENOMIC DNA]</scope>
    <source>
        <strain>RSA 331 / Henzerling II</strain>
    </source>
</reference>
<keyword id="KW-0665">Pyrimidine biosynthesis</keyword>
<keyword id="KW-0808">Transferase</keyword>